<feature type="chain" id="PRO_0000228384" description="4-hydroxy-tetrahydrodipicolinate reductase">
    <location>
        <begin position="1"/>
        <end position="273"/>
    </location>
</feature>
<feature type="active site" description="Proton donor/acceptor" evidence="1">
    <location>
        <position position="159"/>
    </location>
</feature>
<feature type="active site" description="Proton donor" evidence="1">
    <location>
        <position position="163"/>
    </location>
</feature>
<feature type="binding site" evidence="1">
    <location>
        <begin position="12"/>
        <end position="17"/>
    </location>
    <ligand>
        <name>NAD(+)</name>
        <dbReference type="ChEBI" id="CHEBI:57540"/>
    </ligand>
</feature>
<feature type="binding site" evidence="1">
    <location>
        <position position="38"/>
    </location>
    <ligand>
        <name>NAD(+)</name>
        <dbReference type="ChEBI" id="CHEBI:57540"/>
    </ligand>
</feature>
<feature type="binding site" evidence="1">
    <location>
        <position position="39"/>
    </location>
    <ligand>
        <name>NADP(+)</name>
        <dbReference type="ChEBI" id="CHEBI:58349"/>
    </ligand>
</feature>
<feature type="binding site" evidence="1">
    <location>
        <begin position="102"/>
        <end position="104"/>
    </location>
    <ligand>
        <name>NAD(+)</name>
        <dbReference type="ChEBI" id="CHEBI:57540"/>
    </ligand>
</feature>
<feature type="binding site" evidence="1">
    <location>
        <begin position="126"/>
        <end position="129"/>
    </location>
    <ligand>
        <name>NAD(+)</name>
        <dbReference type="ChEBI" id="CHEBI:57540"/>
    </ligand>
</feature>
<feature type="binding site" evidence="1">
    <location>
        <position position="160"/>
    </location>
    <ligand>
        <name>(S)-2,3,4,5-tetrahydrodipicolinate</name>
        <dbReference type="ChEBI" id="CHEBI:16845"/>
    </ligand>
</feature>
<feature type="binding site" evidence="1">
    <location>
        <begin position="169"/>
        <end position="170"/>
    </location>
    <ligand>
        <name>(S)-2,3,4,5-tetrahydrodipicolinate</name>
        <dbReference type="ChEBI" id="CHEBI:16845"/>
    </ligand>
</feature>
<proteinExistence type="inferred from homology"/>
<comment type="function">
    <text evidence="1">Catalyzes the conversion of 4-hydroxy-tetrahydrodipicolinate (HTPA) to tetrahydrodipicolinate.</text>
</comment>
<comment type="catalytic activity">
    <reaction evidence="1">
        <text>(S)-2,3,4,5-tetrahydrodipicolinate + NAD(+) + H2O = (2S,4S)-4-hydroxy-2,3,4,5-tetrahydrodipicolinate + NADH + H(+)</text>
        <dbReference type="Rhea" id="RHEA:35323"/>
        <dbReference type="ChEBI" id="CHEBI:15377"/>
        <dbReference type="ChEBI" id="CHEBI:15378"/>
        <dbReference type="ChEBI" id="CHEBI:16845"/>
        <dbReference type="ChEBI" id="CHEBI:57540"/>
        <dbReference type="ChEBI" id="CHEBI:57945"/>
        <dbReference type="ChEBI" id="CHEBI:67139"/>
        <dbReference type="EC" id="1.17.1.8"/>
    </reaction>
</comment>
<comment type="catalytic activity">
    <reaction evidence="1">
        <text>(S)-2,3,4,5-tetrahydrodipicolinate + NADP(+) + H2O = (2S,4S)-4-hydroxy-2,3,4,5-tetrahydrodipicolinate + NADPH + H(+)</text>
        <dbReference type="Rhea" id="RHEA:35331"/>
        <dbReference type="ChEBI" id="CHEBI:15377"/>
        <dbReference type="ChEBI" id="CHEBI:15378"/>
        <dbReference type="ChEBI" id="CHEBI:16845"/>
        <dbReference type="ChEBI" id="CHEBI:57783"/>
        <dbReference type="ChEBI" id="CHEBI:58349"/>
        <dbReference type="ChEBI" id="CHEBI:67139"/>
        <dbReference type="EC" id="1.17.1.8"/>
    </reaction>
</comment>
<comment type="pathway">
    <text evidence="1">Amino-acid biosynthesis; L-lysine biosynthesis via DAP pathway; (S)-tetrahydrodipicolinate from L-aspartate: step 4/4.</text>
</comment>
<comment type="subunit">
    <text evidence="1">Homotetramer.</text>
</comment>
<comment type="subcellular location">
    <subcellularLocation>
        <location evidence="1">Cytoplasm</location>
    </subcellularLocation>
</comment>
<comment type="similarity">
    <text evidence="1">Belongs to the DapB family.</text>
</comment>
<comment type="caution">
    <text evidence="2">Was originally thought to be a dihydrodipicolinate reductase (DHDPR), catalyzing the conversion of dihydrodipicolinate to tetrahydrodipicolinate. However, it was shown in E.coli that the substrate of the enzymatic reaction is not dihydrodipicolinate (DHDP) but in fact (2S,4S)-4-hydroxy-2,3,4,5-tetrahydrodipicolinic acid (HTPA), the product released by the DapA-catalyzed reaction.</text>
</comment>
<name>DAPB_SALCH</name>
<protein>
    <recommendedName>
        <fullName evidence="1">4-hydroxy-tetrahydrodipicolinate reductase</fullName>
        <shortName evidence="1">HTPA reductase</shortName>
        <ecNumber evidence="1">1.17.1.8</ecNumber>
    </recommendedName>
</protein>
<dbReference type="EC" id="1.17.1.8" evidence="1"/>
<dbReference type="EMBL" id="AE017220">
    <property type="protein sequence ID" value="AAX63964.1"/>
    <property type="molecule type" value="Genomic_DNA"/>
</dbReference>
<dbReference type="RefSeq" id="WP_000544038.1">
    <property type="nucleotide sequence ID" value="NC_006905.1"/>
</dbReference>
<dbReference type="SMR" id="Q57TJ7"/>
<dbReference type="KEGG" id="sec:SCH_0058"/>
<dbReference type="HOGENOM" id="CLU_047479_2_1_6"/>
<dbReference type="UniPathway" id="UPA00034">
    <property type="reaction ID" value="UER00018"/>
</dbReference>
<dbReference type="Proteomes" id="UP000000538">
    <property type="component" value="Chromosome"/>
</dbReference>
<dbReference type="GO" id="GO:0005829">
    <property type="term" value="C:cytosol"/>
    <property type="evidence" value="ECO:0007669"/>
    <property type="project" value="TreeGrafter"/>
</dbReference>
<dbReference type="GO" id="GO:0008839">
    <property type="term" value="F:4-hydroxy-tetrahydrodipicolinate reductase"/>
    <property type="evidence" value="ECO:0007669"/>
    <property type="project" value="UniProtKB-EC"/>
</dbReference>
<dbReference type="GO" id="GO:0051287">
    <property type="term" value="F:NAD binding"/>
    <property type="evidence" value="ECO:0007669"/>
    <property type="project" value="UniProtKB-UniRule"/>
</dbReference>
<dbReference type="GO" id="GO:0050661">
    <property type="term" value="F:NADP binding"/>
    <property type="evidence" value="ECO:0007669"/>
    <property type="project" value="UniProtKB-UniRule"/>
</dbReference>
<dbReference type="GO" id="GO:0016726">
    <property type="term" value="F:oxidoreductase activity, acting on CH or CH2 groups, NAD or NADP as acceptor"/>
    <property type="evidence" value="ECO:0007669"/>
    <property type="project" value="UniProtKB-UniRule"/>
</dbReference>
<dbReference type="GO" id="GO:0019877">
    <property type="term" value="P:diaminopimelate biosynthetic process"/>
    <property type="evidence" value="ECO:0007669"/>
    <property type="project" value="UniProtKB-UniRule"/>
</dbReference>
<dbReference type="GO" id="GO:0009089">
    <property type="term" value="P:lysine biosynthetic process via diaminopimelate"/>
    <property type="evidence" value="ECO:0007669"/>
    <property type="project" value="UniProtKB-UniRule"/>
</dbReference>
<dbReference type="CDD" id="cd02274">
    <property type="entry name" value="DHDPR_N"/>
    <property type="match status" value="1"/>
</dbReference>
<dbReference type="FunFam" id="3.30.360.10:FF:000004">
    <property type="entry name" value="4-hydroxy-tetrahydrodipicolinate reductase"/>
    <property type="match status" value="1"/>
</dbReference>
<dbReference type="FunFam" id="3.40.50.720:FF:000048">
    <property type="entry name" value="4-hydroxy-tetrahydrodipicolinate reductase"/>
    <property type="match status" value="1"/>
</dbReference>
<dbReference type="Gene3D" id="3.30.360.10">
    <property type="entry name" value="Dihydrodipicolinate Reductase, domain 2"/>
    <property type="match status" value="1"/>
</dbReference>
<dbReference type="Gene3D" id="3.40.50.720">
    <property type="entry name" value="NAD(P)-binding Rossmann-like Domain"/>
    <property type="match status" value="1"/>
</dbReference>
<dbReference type="HAMAP" id="MF_00102">
    <property type="entry name" value="DapB"/>
    <property type="match status" value="1"/>
</dbReference>
<dbReference type="InterPro" id="IPR022663">
    <property type="entry name" value="DapB_C"/>
</dbReference>
<dbReference type="InterPro" id="IPR000846">
    <property type="entry name" value="DapB_N"/>
</dbReference>
<dbReference type="InterPro" id="IPR022664">
    <property type="entry name" value="DapB_N_CS"/>
</dbReference>
<dbReference type="InterPro" id="IPR023940">
    <property type="entry name" value="DHDPR_bac"/>
</dbReference>
<dbReference type="InterPro" id="IPR036291">
    <property type="entry name" value="NAD(P)-bd_dom_sf"/>
</dbReference>
<dbReference type="NCBIfam" id="TIGR00036">
    <property type="entry name" value="dapB"/>
    <property type="match status" value="1"/>
</dbReference>
<dbReference type="PANTHER" id="PTHR20836:SF0">
    <property type="entry name" value="4-HYDROXY-TETRAHYDRODIPICOLINATE REDUCTASE 1, CHLOROPLASTIC-RELATED"/>
    <property type="match status" value="1"/>
</dbReference>
<dbReference type="PANTHER" id="PTHR20836">
    <property type="entry name" value="DIHYDRODIPICOLINATE REDUCTASE"/>
    <property type="match status" value="1"/>
</dbReference>
<dbReference type="Pfam" id="PF05173">
    <property type="entry name" value="DapB_C"/>
    <property type="match status" value="1"/>
</dbReference>
<dbReference type="Pfam" id="PF01113">
    <property type="entry name" value="DapB_N"/>
    <property type="match status" value="1"/>
</dbReference>
<dbReference type="PIRSF" id="PIRSF000161">
    <property type="entry name" value="DHPR"/>
    <property type="match status" value="1"/>
</dbReference>
<dbReference type="SUPFAM" id="SSF55347">
    <property type="entry name" value="Glyceraldehyde-3-phosphate dehydrogenase-like, C-terminal domain"/>
    <property type="match status" value="1"/>
</dbReference>
<dbReference type="SUPFAM" id="SSF51735">
    <property type="entry name" value="NAD(P)-binding Rossmann-fold domains"/>
    <property type="match status" value="1"/>
</dbReference>
<dbReference type="PROSITE" id="PS01298">
    <property type="entry name" value="DAPB"/>
    <property type="match status" value="1"/>
</dbReference>
<keyword id="KW-0028">Amino-acid biosynthesis</keyword>
<keyword id="KW-0963">Cytoplasm</keyword>
<keyword id="KW-0220">Diaminopimelate biosynthesis</keyword>
<keyword id="KW-0457">Lysine biosynthesis</keyword>
<keyword id="KW-0520">NAD</keyword>
<keyword id="KW-0521">NADP</keyword>
<keyword id="KW-0560">Oxidoreductase</keyword>
<evidence type="ECO:0000255" key="1">
    <source>
        <dbReference type="HAMAP-Rule" id="MF_00102"/>
    </source>
</evidence>
<evidence type="ECO:0000305" key="2"/>
<gene>
    <name evidence="1" type="primary">dapB</name>
    <name type="ordered locus">SCH_0058</name>
</gene>
<accession>Q57TJ7</accession>
<sequence length="273" mass="28868">MHEAQIRVAIAGAGGRMGRQLIQAAMAMEGVQLGAALEREGSSLLGSDAGELAGVGKSGVTVQSSLEAVKDDFDVFIDFTRPEGTLTHLAFCRQHGKGMVIGTTGFDDAGKQAIREASQEIAIVFAANFSVGVNVMLKLLEKAAKVMGDYSDIEIIEAHHRHKVDAPSGTALAMGEAIAGALDKDLKDCAVYSREGYTGERVAGTIGFATVRAGDIVGEHTAMFADIGERVEITHKASSRMTFANGALRSALWLKTKKNGLFDMRDVLGLDVL</sequence>
<organism>
    <name type="scientific">Salmonella choleraesuis (strain SC-B67)</name>
    <dbReference type="NCBI Taxonomy" id="321314"/>
    <lineage>
        <taxon>Bacteria</taxon>
        <taxon>Pseudomonadati</taxon>
        <taxon>Pseudomonadota</taxon>
        <taxon>Gammaproteobacteria</taxon>
        <taxon>Enterobacterales</taxon>
        <taxon>Enterobacteriaceae</taxon>
        <taxon>Salmonella</taxon>
    </lineage>
</organism>
<reference key="1">
    <citation type="journal article" date="2005" name="Nucleic Acids Res.">
        <title>The genome sequence of Salmonella enterica serovar Choleraesuis, a highly invasive and resistant zoonotic pathogen.</title>
        <authorList>
            <person name="Chiu C.-H."/>
            <person name="Tang P."/>
            <person name="Chu C."/>
            <person name="Hu S."/>
            <person name="Bao Q."/>
            <person name="Yu J."/>
            <person name="Chou Y.-Y."/>
            <person name="Wang H.-S."/>
            <person name="Lee Y.-S."/>
        </authorList>
    </citation>
    <scope>NUCLEOTIDE SEQUENCE [LARGE SCALE GENOMIC DNA]</scope>
    <source>
        <strain>SC-B67</strain>
    </source>
</reference>